<name>DSBB_SHEDO</name>
<sequence>MSKLVTFSQQRSAWLILMFSALGLEASALYFQYVMLLDPCVMCIYIRVAVLGLILAGLVGSIAPRFWIVRFLGMSLWGVSSAWGAKLSFELYQMQANPSPFSTCSFYPEFPTWMPLDAWMPSIFMPTGMCSDIPWTMMSLSMTQWTLIAFVGYSIAFLLFIYPGLLYKKPTNPYS</sequence>
<proteinExistence type="inferred from homology"/>
<protein>
    <recommendedName>
        <fullName evidence="1">Disulfide bond formation protein B</fullName>
    </recommendedName>
    <alternativeName>
        <fullName evidence="1">Disulfide oxidoreductase</fullName>
    </alternativeName>
</protein>
<organism>
    <name type="scientific">Shewanella denitrificans (strain OS217 / ATCC BAA-1090 / DSM 15013)</name>
    <dbReference type="NCBI Taxonomy" id="318161"/>
    <lineage>
        <taxon>Bacteria</taxon>
        <taxon>Pseudomonadati</taxon>
        <taxon>Pseudomonadota</taxon>
        <taxon>Gammaproteobacteria</taxon>
        <taxon>Alteromonadales</taxon>
        <taxon>Shewanellaceae</taxon>
        <taxon>Shewanella</taxon>
    </lineage>
</organism>
<feature type="chain" id="PRO_0000298407" description="Disulfide bond formation protein B">
    <location>
        <begin position="1"/>
        <end position="175"/>
    </location>
</feature>
<feature type="topological domain" description="Cytoplasmic" evidence="1">
    <location>
        <begin position="1"/>
        <end position="13"/>
    </location>
</feature>
<feature type="transmembrane region" description="Helical" evidence="1">
    <location>
        <begin position="14"/>
        <end position="30"/>
    </location>
</feature>
<feature type="topological domain" description="Periplasmic" evidence="1">
    <location>
        <begin position="31"/>
        <end position="48"/>
    </location>
</feature>
<feature type="transmembrane region" description="Helical" evidence="1">
    <location>
        <begin position="49"/>
        <end position="64"/>
    </location>
</feature>
<feature type="topological domain" description="Cytoplasmic" evidence="1">
    <location>
        <begin position="65"/>
        <end position="71"/>
    </location>
</feature>
<feature type="transmembrane region" description="Helical" evidence="1">
    <location>
        <begin position="72"/>
        <end position="89"/>
    </location>
</feature>
<feature type="topological domain" description="Periplasmic" evidence="1">
    <location>
        <begin position="90"/>
        <end position="144"/>
    </location>
</feature>
<feature type="transmembrane region" description="Helical" evidence="1">
    <location>
        <begin position="145"/>
        <end position="163"/>
    </location>
</feature>
<feature type="topological domain" description="Cytoplasmic" evidence="1">
    <location>
        <begin position="164"/>
        <end position="175"/>
    </location>
</feature>
<feature type="disulfide bond" description="Redox-active" evidence="1">
    <location>
        <begin position="40"/>
        <end position="43"/>
    </location>
</feature>
<feature type="disulfide bond" description="Redox-active" evidence="1">
    <location>
        <begin position="104"/>
        <end position="130"/>
    </location>
</feature>
<evidence type="ECO:0000255" key="1">
    <source>
        <dbReference type="HAMAP-Rule" id="MF_00286"/>
    </source>
</evidence>
<reference key="1">
    <citation type="submission" date="2006-03" db="EMBL/GenBank/DDBJ databases">
        <title>Complete sequence of Shewanella denitrificans OS217.</title>
        <authorList>
            <consortium name="US DOE Joint Genome Institute"/>
            <person name="Copeland A."/>
            <person name="Lucas S."/>
            <person name="Lapidus A."/>
            <person name="Barry K."/>
            <person name="Detter J.C."/>
            <person name="Glavina del Rio T."/>
            <person name="Hammon N."/>
            <person name="Israni S."/>
            <person name="Dalin E."/>
            <person name="Tice H."/>
            <person name="Pitluck S."/>
            <person name="Brettin T."/>
            <person name="Bruce D."/>
            <person name="Han C."/>
            <person name="Tapia R."/>
            <person name="Gilna P."/>
            <person name="Kiss H."/>
            <person name="Schmutz J."/>
            <person name="Larimer F."/>
            <person name="Land M."/>
            <person name="Hauser L."/>
            <person name="Kyrpides N."/>
            <person name="Lykidis A."/>
            <person name="Richardson P."/>
        </authorList>
    </citation>
    <scope>NUCLEOTIDE SEQUENCE [LARGE SCALE GENOMIC DNA]</scope>
    <source>
        <strain>OS217 / ATCC BAA-1090 / DSM 15013</strain>
    </source>
</reference>
<gene>
    <name evidence="1" type="primary">dsbB</name>
    <name type="ordered locus">Sden_1633</name>
</gene>
<dbReference type="EMBL" id="CP000302">
    <property type="protein sequence ID" value="ABE54917.1"/>
    <property type="molecule type" value="Genomic_DNA"/>
</dbReference>
<dbReference type="RefSeq" id="WP_011496075.1">
    <property type="nucleotide sequence ID" value="NC_007954.1"/>
</dbReference>
<dbReference type="SMR" id="Q12NQ9"/>
<dbReference type="STRING" id="318161.Sden_1633"/>
<dbReference type="KEGG" id="sdn:Sden_1633"/>
<dbReference type="eggNOG" id="COG1495">
    <property type="taxonomic scope" value="Bacteria"/>
</dbReference>
<dbReference type="HOGENOM" id="CLU_098660_2_0_6"/>
<dbReference type="OrthoDB" id="3711263at2"/>
<dbReference type="Proteomes" id="UP000001982">
    <property type="component" value="Chromosome"/>
</dbReference>
<dbReference type="GO" id="GO:0005886">
    <property type="term" value="C:plasma membrane"/>
    <property type="evidence" value="ECO:0007669"/>
    <property type="project" value="UniProtKB-SubCell"/>
</dbReference>
<dbReference type="GO" id="GO:0009055">
    <property type="term" value="F:electron transfer activity"/>
    <property type="evidence" value="ECO:0007669"/>
    <property type="project" value="UniProtKB-UniRule"/>
</dbReference>
<dbReference type="GO" id="GO:0015035">
    <property type="term" value="F:protein-disulfide reductase activity"/>
    <property type="evidence" value="ECO:0007669"/>
    <property type="project" value="UniProtKB-UniRule"/>
</dbReference>
<dbReference type="GO" id="GO:0006457">
    <property type="term" value="P:protein folding"/>
    <property type="evidence" value="ECO:0007669"/>
    <property type="project" value="InterPro"/>
</dbReference>
<dbReference type="Gene3D" id="1.20.1550.10">
    <property type="entry name" value="DsbB-like"/>
    <property type="match status" value="1"/>
</dbReference>
<dbReference type="HAMAP" id="MF_00286">
    <property type="entry name" value="DsbB"/>
    <property type="match status" value="1"/>
</dbReference>
<dbReference type="InterPro" id="IPR003752">
    <property type="entry name" value="DiS_bond_form_DsbB/BdbC"/>
</dbReference>
<dbReference type="InterPro" id="IPR022920">
    <property type="entry name" value="Disulphide_bond_form_DsbB"/>
</dbReference>
<dbReference type="InterPro" id="IPR050183">
    <property type="entry name" value="DsbB"/>
</dbReference>
<dbReference type="InterPro" id="IPR023380">
    <property type="entry name" value="DsbB-like_sf"/>
</dbReference>
<dbReference type="NCBIfam" id="NF002485">
    <property type="entry name" value="PRK01749.1"/>
    <property type="match status" value="1"/>
</dbReference>
<dbReference type="PANTHER" id="PTHR36570">
    <property type="entry name" value="DISULFIDE BOND FORMATION PROTEIN B"/>
    <property type="match status" value="1"/>
</dbReference>
<dbReference type="PANTHER" id="PTHR36570:SF2">
    <property type="entry name" value="DISULFIDE BOND FORMATION PROTEIN B"/>
    <property type="match status" value="1"/>
</dbReference>
<dbReference type="Pfam" id="PF02600">
    <property type="entry name" value="DsbB"/>
    <property type="match status" value="1"/>
</dbReference>
<dbReference type="SUPFAM" id="SSF158442">
    <property type="entry name" value="DsbB-like"/>
    <property type="match status" value="1"/>
</dbReference>
<comment type="function">
    <text evidence="1">Required for disulfide bond formation in some periplasmic proteins. Acts by oxidizing the DsbA protein.</text>
</comment>
<comment type="subcellular location">
    <subcellularLocation>
        <location evidence="1">Cell inner membrane</location>
        <topology evidence="1">Multi-pass membrane protein</topology>
    </subcellularLocation>
</comment>
<comment type="similarity">
    <text evidence="1">Belongs to the DsbB family.</text>
</comment>
<keyword id="KW-0997">Cell inner membrane</keyword>
<keyword id="KW-1003">Cell membrane</keyword>
<keyword id="KW-0143">Chaperone</keyword>
<keyword id="KW-1015">Disulfide bond</keyword>
<keyword id="KW-0249">Electron transport</keyword>
<keyword id="KW-0472">Membrane</keyword>
<keyword id="KW-0560">Oxidoreductase</keyword>
<keyword id="KW-0676">Redox-active center</keyword>
<keyword id="KW-1185">Reference proteome</keyword>
<keyword id="KW-0812">Transmembrane</keyword>
<keyword id="KW-1133">Transmembrane helix</keyword>
<keyword id="KW-0813">Transport</keyword>
<accession>Q12NQ9</accession>